<reference key="1">
    <citation type="submission" date="2008-02" db="EMBL/GenBank/DDBJ databases">
        <title>Genome sequence of Ureaplasma parvum serovar 3.</title>
        <authorList>
            <person name="Methe B.A."/>
            <person name="Glass J."/>
            <person name="Waites K."/>
            <person name="Shrivastava S."/>
        </authorList>
    </citation>
    <scope>NUCLEOTIDE SEQUENCE [LARGE SCALE GENOMIC DNA]</scope>
    <source>
        <strain>ATCC 27815 / 27 / NCTC 11736</strain>
    </source>
</reference>
<protein>
    <recommendedName>
        <fullName evidence="1">Transcription elongation factor GreA</fullName>
    </recommendedName>
    <alternativeName>
        <fullName evidence="1">Transcript cleavage factor GreA</fullName>
    </alternativeName>
</protein>
<feature type="chain" id="PRO_1000075894" description="Transcription elongation factor GreA">
    <location>
        <begin position="1"/>
        <end position="156"/>
    </location>
</feature>
<feature type="coiled-coil region" evidence="1">
    <location>
        <begin position="1"/>
        <end position="84"/>
    </location>
</feature>
<keyword id="KW-0175">Coiled coil</keyword>
<keyword id="KW-0238">DNA-binding</keyword>
<keyword id="KW-0804">Transcription</keyword>
<keyword id="KW-0805">Transcription regulation</keyword>
<sequence>MAKYTISKHRLEELQLELREILDVKWPAITKQLQDAREQGDLSENADYDAAKNEQAALKKRKDEIEEILENYELIEDVLRSTDEVSIGSTIEIYNYQKDCEEVITLVGSMDSDPFANKISIDTPLGKALVKQKKGTEVTVHTLASPYKVKIIKIID</sequence>
<evidence type="ECO:0000255" key="1">
    <source>
        <dbReference type="HAMAP-Rule" id="MF_00105"/>
    </source>
</evidence>
<proteinExistence type="inferred from homology"/>
<name>GREA_UREP2</name>
<accession>B1AIU2</accession>
<comment type="function">
    <text evidence="1">Necessary for efficient RNA polymerase transcription elongation past template-encoded arresting sites. The arresting sites in DNA have the property of trapping a certain fraction of elongating RNA polymerases that pass through, resulting in locked ternary complexes. Cleavage of the nascent transcript by cleavage factors such as GreA or GreB allows the resumption of elongation from the new 3'terminus. GreA releases sequences of 2 to 3 nucleotides.</text>
</comment>
<comment type="similarity">
    <text evidence="1">Belongs to the GreA/GreB family.</text>
</comment>
<dbReference type="EMBL" id="CP000942">
    <property type="protein sequence ID" value="ACA33097.1"/>
    <property type="molecule type" value="Genomic_DNA"/>
</dbReference>
<dbReference type="RefSeq" id="WP_006688739.1">
    <property type="nucleotide sequence ID" value="NC_010503.1"/>
</dbReference>
<dbReference type="SMR" id="B1AIU2"/>
<dbReference type="GeneID" id="29672476"/>
<dbReference type="KEGG" id="upa:UPA3_0314"/>
<dbReference type="HOGENOM" id="CLU_101379_2_1_14"/>
<dbReference type="Proteomes" id="UP000002162">
    <property type="component" value="Chromosome"/>
</dbReference>
<dbReference type="GO" id="GO:0003677">
    <property type="term" value="F:DNA binding"/>
    <property type="evidence" value="ECO:0007669"/>
    <property type="project" value="UniProtKB-UniRule"/>
</dbReference>
<dbReference type="GO" id="GO:0070063">
    <property type="term" value="F:RNA polymerase binding"/>
    <property type="evidence" value="ECO:0007669"/>
    <property type="project" value="InterPro"/>
</dbReference>
<dbReference type="GO" id="GO:0006354">
    <property type="term" value="P:DNA-templated transcription elongation"/>
    <property type="evidence" value="ECO:0007669"/>
    <property type="project" value="TreeGrafter"/>
</dbReference>
<dbReference type="GO" id="GO:0032784">
    <property type="term" value="P:regulation of DNA-templated transcription elongation"/>
    <property type="evidence" value="ECO:0007669"/>
    <property type="project" value="UniProtKB-UniRule"/>
</dbReference>
<dbReference type="FunFam" id="1.10.287.180:FF:000001">
    <property type="entry name" value="Transcription elongation factor GreA"/>
    <property type="match status" value="1"/>
</dbReference>
<dbReference type="Gene3D" id="3.10.50.30">
    <property type="entry name" value="Transcription elongation factor, GreA/GreB, C-terminal domain"/>
    <property type="match status" value="1"/>
</dbReference>
<dbReference type="Gene3D" id="1.10.287.180">
    <property type="entry name" value="Transcription elongation factor, GreA/GreB, N-terminal domain"/>
    <property type="match status" value="1"/>
</dbReference>
<dbReference type="HAMAP" id="MF_00105">
    <property type="entry name" value="GreA_GreB"/>
    <property type="match status" value="1"/>
</dbReference>
<dbReference type="InterPro" id="IPR036953">
    <property type="entry name" value="GreA/GreB_C_sf"/>
</dbReference>
<dbReference type="InterPro" id="IPR018151">
    <property type="entry name" value="TF_GreA/GreB_CS"/>
</dbReference>
<dbReference type="InterPro" id="IPR006359">
    <property type="entry name" value="Tscrpt_elong_fac_GreA"/>
</dbReference>
<dbReference type="InterPro" id="IPR028624">
    <property type="entry name" value="Tscrpt_elong_fac_GreA/B"/>
</dbReference>
<dbReference type="InterPro" id="IPR001437">
    <property type="entry name" value="Tscrpt_elong_fac_GreA/B_C"/>
</dbReference>
<dbReference type="InterPro" id="IPR023459">
    <property type="entry name" value="Tscrpt_elong_fac_GreA/B_fam"/>
</dbReference>
<dbReference type="InterPro" id="IPR022691">
    <property type="entry name" value="Tscrpt_elong_fac_GreA/B_N"/>
</dbReference>
<dbReference type="InterPro" id="IPR036805">
    <property type="entry name" value="Tscrpt_elong_fac_GreA/B_N_sf"/>
</dbReference>
<dbReference type="NCBIfam" id="TIGR01462">
    <property type="entry name" value="greA"/>
    <property type="match status" value="1"/>
</dbReference>
<dbReference type="NCBIfam" id="NF001263">
    <property type="entry name" value="PRK00226.1-4"/>
    <property type="match status" value="1"/>
</dbReference>
<dbReference type="PANTHER" id="PTHR30437">
    <property type="entry name" value="TRANSCRIPTION ELONGATION FACTOR GREA"/>
    <property type="match status" value="1"/>
</dbReference>
<dbReference type="PANTHER" id="PTHR30437:SF4">
    <property type="entry name" value="TRANSCRIPTION ELONGATION FACTOR GREA"/>
    <property type="match status" value="1"/>
</dbReference>
<dbReference type="Pfam" id="PF01272">
    <property type="entry name" value="GreA_GreB"/>
    <property type="match status" value="1"/>
</dbReference>
<dbReference type="Pfam" id="PF03449">
    <property type="entry name" value="GreA_GreB_N"/>
    <property type="match status" value="1"/>
</dbReference>
<dbReference type="PIRSF" id="PIRSF006092">
    <property type="entry name" value="GreA_GreB"/>
    <property type="match status" value="1"/>
</dbReference>
<dbReference type="SUPFAM" id="SSF54534">
    <property type="entry name" value="FKBP-like"/>
    <property type="match status" value="1"/>
</dbReference>
<dbReference type="SUPFAM" id="SSF46557">
    <property type="entry name" value="GreA transcript cleavage protein, N-terminal domain"/>
    <property type="match status" value="1"/>
</dbReference>
<dbReference type="PROSITE" id="PS00829">
    <property type="entry name" value="GREAB_1"/>
    <property type="match status" value="1"/>
</dbReference>
<gene>
    <name evidence="1" type="primary">greA</name>
    <name type="ordered locus">UPA3_0314</name>
</gene>
<organism>
    <name type="scientific">Ureaplasma parvum serovar 3 (strain ATCC 27815 / 27 / NCTC 11736)</name>
    <dbReference type="NCBI Taxonomy" id="505682"/>
    <lineage>
        <taxon>Bacteria</taxon>
        <taxon>Bacillati</taxon>
        <taxon>Mycoplasmatota</taxon>
        <taxon>Mycoplasmoidales</taxon>
        <taxon>Mycoplasmoidaceae</taxon>
        <taxon>Ureaplasma</taxon>
    </lineage>
</organism>